<dbReference type="EMBL" id="FO080733">
    <property type="protein sequence ID" value="CCD66260.1"/>
    <property type="molecule type" value="Genomic_DNA"/>
</dbReference>
<dbReference type="EMBL" id="FO080733">
    <property type="protein sequence ID" value="CCD66261.1"/>
    <property type="molecule type" value="Genomic_DNA"/>
</dbReference>
<dbReference type="PIR" id="T15716">
    <property type="entry name" value="T15716"/>
</dbReference>
<dbReference type="RefSeq" id="NP_001364722.1">
    <molecule id="Q09259-1"/>
    <property type="nucleotide sequence ID" value="NM_001377815.2"/>
</dbReference>
<dbReference type="RefSeq" id="NP_001364723.1">
    <molecule id="Q09259-2"/>
    <property type="nucleotide sequence ID" value="NM_001377814.3"/>
</dbReference>
<dbReference type="RefSeq" id="NP_495521.1">
    <property type="nucleotide sequence ID" value="NM_063120.4"/>
</dbReference>
<dbReference type="RefSeq" id="NP_495522.1">
    <property type="nucleotide sequence ID" value="NM_063121.3"/>
</dbReference>
<dbReference type="FunCoup" id="Q09259">
    <property type="interactions" value="143"/>
</dbReference>
<dbReference type="STRING" id="6239.C30G12.6a.1"/>
<dbReference type="PaxDb" id="6239-C30G12.6a"/>
<dbReference type="EnsemblMetazoa" id="C30G12.6a.1">
    <molecule id="Q09259-1"/>
    <property type="protein sequence ID" value="C30G12.6a.1"/>
    <property type="gene ID" value="WBGene00016277"/>
</dbReference>
<dbReference type="EnsemblMetazoa" id="C30G12.6b.1">
    <molecule id="Q09259-2"/>
    <property type="protein sequence ID" value="C30G12.6b.1"/>
    <property type="gene ID" value="WBGene00016277"/>
</dbReference>
<dbReference type="GeneID" id="174196"/>
<dbReference type="UCSC" id="C30G12.6a">
    <molecule id="Q09259-1"/>
    <property type="organism name" value="c. elegans"/>
</dbReference>
<dbReference type="AGR" id="WB:WBGene00016277"/>
<dbReference type="WormBase" id="C30G12.6a">
    <molecule id="Q09259-1"/>
    <property type="protein sequence ID" value="CE29205"/>
    <property type="gene ID" value="WBGene00016277"/>
</dbReference>
<dbReference type="WormBase" id="C30G12.6b">
    <molecule id="Q09259-2"/>
    <property type="protein sequence ID" value="CE29206"/>
    <property type="gene ID" value="WBGene00016277"/>
</dbReference>
<dbReference type="eggNOG" id="ENOG502R16V">
    <property type="taxonomic scope" value="Eukaryota"/>
</dbReference>
<dbReference type="HOGENOM" id="CLU_280934_0_0_1"/>
<dbReference type="InParanoid" id="Q09259"/>
<dbReference type="OMA" id="QFFLISC"/>
<dbReference type="PRO" id="PR:Q09259"/>
<dbReference type="Proteomes" id="UP000001940">
    <property type="component" value="Chromosome II"/>
</dbReference>
<dbReference type="Bgee" id="WBGene00016277">
    <property type="expression patterns" value="Expressed in germ line (C elegans) and 3 other cell types or tissues"/>
</dbReference>
<dbReference type="InterPro" id="IPR016024">
    <property type="entry name" value="ARM-type_fold"/>
</dbReference>
<dbReference type="SUPFAM" id="SSF48371">
    <property type="entry name" value="ARM repeat"/>
    <property type="match status" value="1"/>
</dbReference>
<gene>
    <name type="ORF">C30G12.6</name>
</gene>
<reference key="1">
    <citation type="journal article" date="1998" name="Science">
        <title>Genome sequence of the nematode C. elegans: a platform for investigating biology.</title>
        <authorList>
            <consortium name="The C. elegans sequencing consortium"/>
        </authorList>
    </citation>
    <scope>NUCLEOTIDE SEQUENCE [LARGE SCALE GENOMIC DNA]</scope>
    <scope>ALTERNATIVE SPLICING</scope>
    <source>
        <strain>Bristol N2</strain>
    </source>
</reference>
<organism>
    <name type="scientific">Caenorhabditis elegans</name>
    <dbReference type="NCBI Taxonomy" id="6239"/>
    <lineage>
        <taxon>Eukaryota</taxon>
        <taxon>Metazoa</taxon>
        <taxon>Ecdysozoa</taxon>
        <taxon>Nematoda</taxon>
        <taxon>Chromadorea</taxon>
        <taxon>Rhabditida</taxon>
        <taxon>Rhabditina</taxon>
        <taxon>Rhabditomorpha</taxon>
        <taxon>Rhabditoidea</taxon>
        <taxon>Rhabditidae</taxon>
        <taxon>Peloderinae</taxon>
        <taxon>Caenorhabditis</taxon>
    </lineage>
</organism>
<sequence>MESGDHLGNLFDDMVEEDNDEDSFEEPACEDSFDSQEASSKANEPQNDSFDEPIQSSVSKQSDDANGEDEINEEVIQEQKELDLNEEDFNLLTIEEVPLDVLTARIRRVFTEVTYRAEPAAIALFDVAHKIIFKSTMLDCKRNTVIDSIIEGLISIIVDERERDQGAEEAEHVLMIFIAKLAIKNKSMKCSDLLYKLILLVDRLYLHADSFVRCRIYRLIACLMEEANRYADVMREHGDDAFLSDEDPTESEVMIPSGVKNRWMGKLAKSLLDKSPEVRCKAVIALSLWDHDIECKTTCCDEVTVNDLLWKSVHDVDESVRVNAARRVHIANENDIDKCIDYVETSKDNRVKQAIIVRLASDVSLLSFSEKQRFRLVNLLNNSDSARVQDVIHQLLVESWMKVAGDEIISPSIFPFPDSDNNNIPKEFPSIILEYLDPLVDPTAVYVFMKFATVRFIQKSTVQQACGSLDVEKFMKDLLSMTIPDCERVGLMRRTTFRLIPKDNNDGNEDIRKIFSRIFISRCFVDVIFNFAKGRLDATHLRSRALTFFLPDVTTFVEHLEKFCDAYFHRNMSTDYTCKDLVLYNLLHLMNVATKYGDLHDDKMLYKHALKKILGNSSFVFSSETILTIVMICFDLCKIGDDVKQLCDWMCDTAKQLMLSHEEVLNLEEAMKNDKVLEQMYLRSATMLLATCKHEEVESPTASMSSLFKTIIPALLGNKNEELQQLGLELIGFATSIDFENCEPYLKLTTLLIQRGDEVLTSTGVNTLIKVIKSQGFPKTANAIFQGEEQTEDDCQDALAKVFEKALVSLQGMALVQSVQDCLSMLSYGRYAWSKLMCAIIMLVFQKSNECLPLVKIFASYCKKSIRSDFNKMNLLLGFCRAVGIISKTGEDDSNIKLLEMTELVCECISSVHTIDGDEVIPQKKRKTDNEEELYPEIVLANRMVGRANSHPSSWIIRHVFTAMATSLRLECVPMKIVDTLHELLVDTYTVVRFNSNKTTQIAFKRFLTHCEKVITLHERMNALKLGVDFKKVKKEVICADEDPKSVSSSSSLGRKRGRKRENSEEEEKIDADDSFELFQYVPKSTRTRIRPTVNVEEDQNIKTEIEDSDDLEDSFEL</sequence>
<keyword id="KW-0025">Alternative splicing</keyword>
<keyword id="KW-1185">Reference proteome</keyword>
<comment type="alternative products">
    <event type="alternative splicing"/>
    <isoform>
        <id>Q09259-1</id>
        <name evidence="3">a</name>
        <sequence type="displayed"/>
    </isoform>
    <isoform>
        <id>Q09259-2</id>
        <name evidence="4">b</name>
        <sequence type="described" ref="VSP_010625"/>
    </isoform>
</comment>
<protein>
    <recommendedName>
        <fullName>Uncharacterized protein C30G12.6</fullName>
    </recommendedName>
</protein>
<accession>Q09259</accession>
<accession>Q8TA76</accession>
<accession>Q8TA77</accession>
<feature type="chain" id="PRO_0000065212" description="Uncharacterized protein C30G12.6">
    <location>
        <begin position="1"/>
        <end position="1118"/>
    </location>
</feature>
<feature type="region of interest" description="Disordered" evidence="1">
    <location>
        <begin position="1"/>
        <end position="69"/>
    </location>
</feature>
<feature type="region of interest" description="Disordered" evidence="1">
    <location>
        <begin position="1044"/>
        <end position="1071"/>
    </location>
</feature>
<feature type="region of interest" description="Disordered" evidence="1">
    <location>
        <begin position="1090"/>
        <end position="1118"/>
    </location>
</feature>
<feature type="compositionally biased region" description="Acidic residues" evidence="1">
    <location>
        <begin position="13"/>
        <end position="34"/>
    </location>
</feature>
<feature type="compositionally biased region" description="Polar residues" evidence="1">
    <location>
        <begin position="35"/>
        <end position="60"/>
    </location>
</feature>
<feature type="compositionally biased region" description="Acidic residues" evidence="1">
    <location>
        <begin position="1107"/>
        <end position="1118"/>
    </location>
</feature>
<feature type="splice variant" id="VSP_010625" description="In isoform b." evidence="2">
    <location>
        <begin position="1078"/>
        <end position="1080"/>
    </location>
</feature>
<proteinExistence type="predicted"/>
<evidence type="ECO:0000256" key="1">
    <source>
        <dbReference type="SAM" id="MobiDB-lite"/>
    </source>
</evidence>
<evidence type="ECO:0000305" key="2"/>
<evidence type="ECO:0000312" key="3">
    <source>
        <dbReference type="WormBase" id="C30G12.6a"/>
    </source>
</evidence>
<evidence type="ECO:0000312" key="4">
    <source>
        <dbReference type="WormBase" id="C30G12.6b"/>
    </source>
</evidence>
<name>YQB6_CAEEL</name>